<feature type="chain" id="PRO_1000100850" description="Galactokinase">
    <location>
        <begin position="1"/>
        <end position="383"/>
    </location>
</feature>
<feature type="active site" description="Proton acceptor" evidence="1">
    <location>
        <position position="174"/>
    </location>
</feature>
<feature type="binding site" evidence="1">
    <location>
        <begin position="34"/>
        <end position="37"/>
    </location>
    <ligand>
        <name>substrate</name>
    </ligand>
</feature>
<feature type="binding site" evidence="1">
    <location>
        <begin position="124"/>
        <end position="130"/>
    </location>
    <ligand>
        <name>ATP</name>
        <dbReference type="ChEBI" id="CHEBI:30616"/>
    </ligand>
</feature>
<feature type="binding site" evidence="1">
    <location>
        <position position="130"/>
    </location>
    <ligand>
        <name>Mg(2+)</name>
        <dbReference type="ChEBI" id="CHEBI:18420"/>
    </ligand>
</feature>
<feature type="binding site" evidence="1">
    <location>
        <position position="162"/>
    </location>
    <ligand>
        <name>Mg(2+)</name>
        <dbReference type="ChEBI" id="CHEBI:18420"/>
    </ligand>
</feature>
<feature type="binding site" evidence="1">
    <location>
        <position position="223"/>
    </location>
    <ligand>
        <name>substrate</name>
    </ligand>
</feature>
<feature type="site" description="Transition state stabilizer" evidence="1">
    <location>
        <position position="28"/>
    </location>
</feature>
<dbReference type="EC" id="2.7.1.6" evidence="1"/>
<dbReference type="EMBL" id="CP000901">
    <property type="protein sequence ID" value="ABX88509.1"/>
    <property type="molecule type" value="Genomic_DNA"/>
</dbReference>
<dbReference type="RefSeq" id="WP_002210748.1">
    <property type="nucleotide sequence ID" value="NZ_CP009935.1"/>
</dbReference>
<dbReference type="SMR" id="A9R3B5"/>
<dbReference type="GeneID" id="57977277"/>
<dbReference type="KEGG" id="ypg:YpAngola_A1411"/>
<dbReference type="PATRIC" id="fig|349746.12.peg.2376"/>
<dbReference type="UniPathway" id="UPA00214"/>
<dbReference type="GO" id="GO:0005829">
    <property type="term" value="C:cytosol"/>
    <property type="evidence" value="ECO:0007669"/>
    <property type="project" value="TreeGrafter"/>
</dbReference>
<dbReference type="GO" id="GO:0005524">
    <property type="term" value="F:ATP binding"/>
    <property type="evidence" value="ECO:0007669"/>
    <property type="project" value="UniProtKB-UniRule"/>
</dbReference>
<dbReference type="GO" id="GO:0004335">
    <property type="term" value="F:galactokinase activity"/>
    <property type="evidence" value="ECO:0007669"/>
    <property type="project" value="UniProtKB-UniRule"/>
</dbReference>
<dbReference type="GO" id="GO:0000287">
    <property type="term" value="F:magnesium ion binding"/>
    <property type="evidence" value="ECO:0007669"/>
    <property type="project" value="UniProtKB-UniRule"/>
</dbReference>
<dbReference type="GO" id="GO:0006012">
    <property type="term" value="P:galactose metabolic process"/>
    <property type="evidence" value="ECO:0007669"/>
    <property type="project" value="UniProtKB-UniRule"/>
</dbReference>
<dbReference type="FunFam" id="3.30.230.10:FF:000017">
    <property type="entry name" value="Galactokinase"/>
    <property type="match status" value="1"/>
</dbReference>
<dbReference type="FunFam" id="3.30.70.890:FF:000001">
    <property type="entry name" value="Galactokinase"/>
    <property type="match status" value="1"/>
</dbReference>
<dbReference type="Gene3D" id="3.30.230.10">
    <property type="match status" value="1"/>
</dbReference>
<dbReference type="Gene3D" id="3.30.70.890">
    <property type="entry name" value="GHMP kinase, C-terminal domain"/>
    <property type="match status" value="1"/>
</dbReference>
<dbReference type="HAMAP" id="MF_00246">
    <property type="entry name" value="Galactokinase"/>
    <property type="match status" value="1"/>
</dbReference>
<dbReference type="InterPro" id="IPR000705">
    <property type="entry name" value="Galactokinase"/>
</dbReference>
<dbReference type="InterPro" id="IPR022963">
    <property type="entry name" value="Galactokinase_bac"/>
</dbReference>
<dbReference type="InterPro" id="IPR019741">
    <property type="entry name" value="Galactokinase_CS"/>
</dbReference>
<dbReference type="InterPro" id="IPR019539">
    <property type="entry name" value="GalKase_N"/>
</dbReference>
<dbReference type="InterPro" id="IPR013750">
    <property type="entry name" value="GHMP_kinase_C_dom"/>
</dbReference>
<dbReference type="InterPro" id="IPR036554">
    <property type="entry name" value="GHMP_kinase_C_sf"/>
</dbReference>
<dbReference type="InterPro" id="IPR006204">
    <property type="entry name" value="GHMP_kinase_N_dom"/>
</dbReference>
<dbReference type="InterPro" id="IPR006203">
    <property type="entry name" value="GHMP_knse_ATP-bd_CS"/>
</dbReference>
<dbReference type="InterPro" id="IPR006206">
    <property type="entry name" value="Mevalonate/galactokinase"/>
</dbReference>
<dbReference type="InterPro" id="IPR020568">
    <property type="entry name" value="Ribosomal_Su5_D2-typ_SF"/>
</dbReference>
<dbReference type="InterPro" id="IPR014721">
    <property type="entry name" value="Ribsml_uS5_D2-typ_fold_subgr"/>
</dbReference>
<dbReference type="NCBIfam" id="TIGR00131">
    <property type="entry name" value="gal_kin"/>
    <property type="match status" value="1"/>
</dbReference>
<dbReference type="NCBIfam" id="NF003472">
    <property type="entry name" value="PRK05101.1"/>
    <property type="match status" value="1"/>
</dbReference>
<dbReference type="PANTHER" id="PTHR10457:SF7">
    <property type="entry name" value="GALACTOKINASE-RELATED"/>
    <property type="match status" value="1"/>
</dbReference>
<dbReference type="PANTHER" id="PTHR10457">
    <property type="entry name" value="MEVALONATE KINASE/GALACTOKINASE"/>
    <property type="match status" value="1"/>
</dbReference>
<dbReference type="Pfam" id="PF10509">
    <property type="entry name" value="GalKase_gal_bdg"/>
    <property type="match status" value="1"/>
</dbReference>
<dbReference type="Pfam" id="PF08544">
    <property type="entry name" value="GHMP_kinases_C"/>
    <property type="match status" value="1"/>
</dbReference>
<dbReference type="Pfam" id="PF00288">
    <property type="entry name" value="GHMP_kinases_N"/>
    <property type="match status" value="1"/>
</dbReference>
<dbReference type="PIRSF" id="PIRSF000530">
    <property type="entry name" value="Galactokinase"/>
    <property type="match status" value="1"/>
</dbReference>
<dbReference type="PRINTS" id="PR00473">
    <property type="entry name" value="GALCTOKINASE"/>
</dbReference>
<dbReference type="PRINTS" id="PR00959">
    <property type="entry name" value="MEVGALKINASE"/>
</dbReference>
<dbReference type="SUPFAM" id="SSF55060">
    <property type="entry name" value="GHMP Kinase, C-terminal domain"/>
    <property type="match status" value="1"/>
</dbReference>
<dbReference type="SUPFAM" id="SSF54211">
    <property type="entry name" value="Ribosomal protein S5 domain 2-like"/>
    <property type="match status" value="1"/>
</dbReference>
<dbReference type="PROSITE" id="PS00106">
    <property type="entry name" value="GALACTOKINASE"/>
    <property type="match status" value="1"/>
</dbReference>
<dbReference type="PROSITE" id="PS00627">
    <property type="entry name" value="GHMP_KINASES_ATP"/>
    <property type="match status" value="1"/>
</dbReference>
<reference key="1">
    <citation type="journal article" date="2010" name="J. Bacteriol.">
        <title>Genome sequence of the deep-rooted Yersinia pestis strain Angola reveals new insights into the evolution and pangenome of the plague bacterium.</title>
        <authorList>
            <person name="Eppinger M."/>
            <person name="Worsham P.L."/>
            <person name="Nikolich M.P."/>
            <person name="Riley D.R."/>
            <person name="Sebastian Y."/>
            <person name="Mou S."/>
            <person name="Achtman M."/>
            <person name="Lindler L.E."/>
            <person name="Ravel J."/>
        </authorList>
    </citation>
    <scope>NUCLEOTIDE SEQUENCE [LARGE SCALE GENOMIC DNA]</scope>
    <source>
        <strain>Angola</strain>
    </source>
</reference>
<evidence type="ECO:0000255" key="1">
    <source>
        <dbReference type="HAMAP-Rule" id="MF_00246"/>
    </source>
</evidence>
<gene>
    <name evidence="1" type="primary">galK</name>
    <name type="ordered locus">YpAngola_A1411</name>
</gene>
<comment type="function">
    <text evidence="1">Catalyzes the transfer of the gamma-phosphate of ATP to D-galactose to form alpha-D-galactose-1-phosphate (Gal-1-P).</text>
</comment>
<comment type="catalytic activity">
    <reaction evidence="1">
        <text>alpha-D-galactose + ATP = alpha-D-galactose 1-phosphate + ADP + H(+)</text>
        <dbReference type="Rhea" id="RHEA:13553"/>
        <dbReference type="ChEBI" id="CHEBI:15378"/>
        <dbReference type="ChEBI" id="CHEBI:28061"/>
        <dbReference type="ChEBI" id="CHEBI:30616"/>
        <dbReference type="ChEBI" id="CHEBI:58336"/>
        <dbReference type="ChEBI" id="CHEBI:456216"/>
        <dbReference type="EC" id="2.7.1.6"/>
    </reaction>
</comment>
<comment type="pathway">
    <text evidence="1">Carbohydrate metabolism; galactose metabolism.</text>
</comment>
<comment type="subcellular location">
    <subcellularLocation>
        <location evidence="1">Cytoplasm</location>
    </subcellularLocation>
</comment>
<comment type="similarity">
    <text evidence="1">Belongs to the GHMP kinase family. GalK subfamily.</text>
</comment>
<sequence length="383" mass="41866">MSLKQHTQTIFRQQFDRESDITIKAPGRVNLIGEHTDYNDGFVLPCAINYETVISCGKRDDRQIRVIAADYENQQDIFSLDAPIVPHPEYRWADYVRGVVKHLQMRNADFGGADLVICGNVPQGAGLSSSASLEVAVGQALQSLYQLPLSGVELALNGQEAENQFVGCNCGIMDQLISALGKKDHALLIDCRTLETRAVPMPENMAVVIINSNIQRGLVDSEYNTRRQQCEAAARFFGVKALRDVEPSLFFSIQDELDPVVAKRARHVISENARTLAAADALAAGNLKLMGQLMQESHISMRDDFEITVPPIDRLVEIVKSVIGDQGGVRMTGGGFGGCIIALMPLELVEQVRTTVAQEYPAHSGGKKETFYVCQASQGAGLC</sequence>
<organism>
    <name type="scientific">Yersinia pestis bv. Antiqua (strain Angola)</name>
    <dbReference type="NCBI Taxonomy" id="349746"/>
    <lineage>
        <taxon>Bacteria</taxon>
        <taxon>Pseudomonadati</taxon>
        <taxon>Pseudomonadota</taxon>
        <taxon>Gammaproteobacteria</taxon>
        <taxon>Enterobacterales</taxon>
        <taxon>Yersiniaceae</taxon>
        <taxon>Yersinia</taxon>
    </lineage>
</organism>
<keyword id="KW-0067">ATP-binding</keyword>
<keyword id="KW-0119">Carbohydrate metabolism</keyword>
<keyword id="KW-0963">Cytoplasm</keyword>
<keyword id="KW-0299">Galactose metabolism</keyword>
<keyword id="KW-0418">Kinase</keyword>
<keyword id="KW-0460">Magnesium</keyword>
<keyword id="KW-0479">Metal-binding</keyword>
<keyword id="KW-0547">Nucleotide-binding</keyword>
<keyword id="KW-0808">Transferase</keyword>
<proteinExistence type="inferred from homology"/>
<name>GAL1_YERPG</name>
<protein>
    <recommendedName>
        <fullName evidence="1">Galactokinase</fullName>
        <ecNumber evidence="1">2.7.1.6</ecNumber>
    </recommendedName>
    <alternativeName>
        <fullName evidence="1">Galactose kinase</fullName>
    </alternativeName>
</protein>
<accession>A9R3B5</accession>